<protein>
    <recommendedName>
        <fullName evidence="1">Large ribosomal subunit protein bL33</fullName>
    </recommendedName>
    <alternativeName>
        <fullName evidence="2">50S ribosomal protein L33</fullName>
    </alternativeName>
</protein>
<accession>Q01SX1</accession>
<name>RL33_SOLUE</name>
<dbReference type="EMBL" id="CP000473">
    <property type="protein sequence ID" value="ABJ87249.1"/>
    <property type="molecule type" value="Genomic_DNA"/>
</dbReference>
<dbReference type="SMR" id="Q01SX1"/>
<dbReference type="STRING" id="234267.Acid_6323"/>
<dbReference type="KEGG" id="sus:Acid_6323"/>
<dbReference type="eggNOG" id="COG0267">
    <property type="taxonomic scope" value="Bacteria"/>
</dbReference>
<dbReference type="HOGENOM" id="CLU_190949_0_2_0"/>
<dbReference type="InParanoid" id="Q01SX1"/>
<dbReference type="GO" id="GO:0005737">
    <property type="term" value="C:cytoplasm"/>
    <property type="evidence" value="ECO:0007669"/>
    <property type="project" value="UniProtKB-ARBA"/>
</dbReference>
<dbReference type="GO" id="GO:1990904">
    <property type="term" value="C:ribonucleoprotein complex"/>
    <property type="evidence" value="ECO:0007669"/>
    <property type="project" value="UniProtKB-KW"/>
</dbReference>
<dbReference type="GO" id="GO:0005840">
    <property type="term" value="C:ribosome"/>
    <property type="evidence" value="ECO:0007669"/>
    <property type="project" value="UniProtKB-KW"/>
</dbReference>
<dbReference type="GO" id="GO:0003735">
    <property type="term" value="F:structural constituent of ribosome"/>
    <property type="evidence" value="ECO:0007669"/>
    <property type="project" value="InterPro"/>
</dbReference>
<dbReference type="GO" id="GO:0006412">
    <property type="term" value="P:translation"/>
    <property type="evidence" value="ECO:0007669"/>
    <property type="project" value="UniProtKB-UniRule"/>
</dbReference>
<dbReference type="Gene3D" id="2.20.28.120">
    <property type="entry name" value="Ribosomal protein L33"/>
    <property type="match status" value="1"/>
</dbReference>
<dbReference type="HAMAP" id="MF_00294">
    <property type="entry name" value="Ribosomal_bL33"/>
    <property type="match status" value="1"/>
</dbReference>
<dbReference type="InterPro" id="IPR001705">
    <property type="entry name" value="Ribosomal_bL33"/>
</dbReference>
<dbReference type="InterPro" id="IPR018264">
    <property type="entry name" value="Ribosomal_bL33_CS"/>
</dbReference>
<dbReference type="InterPro" id="IPR038584">
    <property type="entry name" value="Ribosomal_bL33_sf"/>
</dbReference>
<dbReference type="InterPro" id="IPR011332">
    <property type="entry name" value="Ribosomal_zn-bd"/>
</dbReference>
<dbReference type="NCBIfam" id="NF001764">
    <property type="entry name" value="PRK00504.1"/>
    <property type="match status" value="1"/>
</dbReference>
<dbReference type="NCBIfam" id="NF001860">
    <property type="entry name" value="PRK00595.1"/>
    <property type="match status" value="1"/>
</dbReference>
<dbReference type="NCBIfam" id="TIGR01023">
    <property type="entry name" value="rpmG_bact"/>
    <property type="match status" value="1"/>
</dbReference>
<dbReference type="PANTHER" id="PTHR43168">
    <property type="entry name" value="50S RIBOSOMAL PROTEIN L33, CHLOROPLASTIC"/>
    <property type="match status" value="1"/>
</dbReference>
<dbReference type="PANTHER" id="PTHR43168:SF2">
    <property type="entry name" value="LARGE RIBOSOMAL SUBUNIT PROTEIN BL33C"/>
    <property type="match status" value="1"/>
</dbReference>
<dbReference type="Pfam" id="PF00471">
    <property type="entry name" value="Ribosomal_L33"/>
    <property type="match status" value="1"/>
</dbReference>
<dbReference type="SUPFAM" id="SSF57829">
    <property type="entry name" value="Zn-binding ribosomal proteins"/>
    <property type="match status" value="1"/>
</dbReference>
<dbReference type="PROSITE" id="PS00582">
    <property type="entry name" value="RIBOSOMAL_L33"/>
    <property type="match status" value="1"/>
</dbReference>
<gene>
    <name evidence="1" type="primary">rpmG</name>
    <name type="ordered locus">Acid_6323</name>
</gene>
<feature type="chain" id="PRO_0000356672" description="Large ribosomal subunit protein bL33">
    <location>
        <begin position="1"/>
        <end position="50"/>
    </location>
</feature>
<evidence type="ECO:0000255" key="1">
    <source>
        <dbReference type="HAMAP-Rule" id="MF_00294"/>
    </source>
</evidence>
<evidence type="ECO:0000305" key="2"/>
<reference key="1">
    <citation type="journal article" date="2009" name="Appl. Environ. Microbiol.">
        <title>Three genomes from the phylum Acidobacteria provide insight into the lifestyles of these microorganisms in soils.</title>
        <authorList>
            <person name="Ward N.L."/>
            <person name="Challacombe J.F."/>
            <person name="Janssen P.H."/>
            <person name="Henrissat B."/>
            <person name="Coutinho P.M."/>
            <person name="Wu M."/>
            <person name="Xie G."/>
            <person name="Haft D.H."/>
            <person name="Sait M."/>
            <person name="Badger J."/>
            <person name="Barabote R.D."/>
            <person name="Bradley B."/>
            <person name="Brettin T.S."/>
            <person name="Brinkac L.M."/>
            <person name="Bruce D."/>
            <person name="Creasy T."/>
            <person name="Daugherty S.C."/>
            <person name="Davidsen T.M."/>
            <person name="DeBoy R.T."/>
            <person name="Detter J.C."/>
            <person name="Dodson R.J."/>
            <person name="Durkin A.S."/>
            <person name="Ganapathy A."/>
            <person name="Gwinn-Giglio M."/>
            <person name="Han C.S."/>
            <person name="Khouri H."/>
            <person name="Kiss H."/>
            <person name="Kothari S.P."/>
            <person name="Madupu R."/>
            <person name="Nelson K.E."/>
            <person name="Nelson W.C."/>
            <person name="Paulsen I."/>
            <person name="Penn K."/>
            <person name="Ren Q."/>
            <person name="Rosovitz M.J."/>
            <person name="Selengut J.D."/>
            <person name="Shrivastava S."/>
            <person name="Sullivan S.A."/>
            <person name="Tapia R."/>
            <person name="Thompson L.S."/>
            <person name="Watkins K.L."/>
            <person name="Yang Q."/>
            <person name="Yu C."/>
            <person name="Zafar N."/>
            <person name="Zhou L."/>
            <person name="Kuske C.R."/>
        </authorList>
    </citation>
    <scope>NUCLEOTIDE SEQUENCE [LARGE SCALE GENOMIC DNA]</scope>
    <source>
        <strain>Ellin6076</strain>
    </source>
</reference>
<comment type="similarity">
    <text evidence="1">Belongs to the bacterial ribosomal protein bL33 family.</text>
</comment>
<proteinExistence type="inferred from homology"/>
<keyword id="KW-0687">Ribonucleoprotein</keyword>
<keyword id="KW-0689">Ribosomal protein</keyword>
<sequence>MPRDIITFQCTECKNRNYTSTKNKKTTTERLEMKKFCRHCRKHQGHKEIK</sequence>
<organism>
    <name type="scientific">Solibacter usitatus (strain Ellin6076)</name>
    <dbReference type="NCBI Taxonomy" id="234267"/>
    <lineage>
        <taxon>Bacteria</taxon>
        <taxon>Pseudomonadati</taxon>
        <taxon>Acidobacteriota</taxon>
        <taxon>Terriglobia</taxon>
        <taxon>Bryobacterales</taxon>
        <taxon>Solibacteraceae</taxon>
        <taxon>Candidatus Solibacter</taxon>
    </lineage>
</organism>